<sequence>MMTLQMDKTTASSSWERAKSIYDEIAELANKRQKAGNPPDPNLLQLLREKYEAIILESHTFSEQHNIEIPLWQLHYKRIEYFRLHINRVLASSTSTAAQNVKGPSKAEQIAQLKLQFRTFLSEATGFYHDMILKIRSKYGLPLGSFSEDQQSQNLSDKDGKELAEVQKALKSCHRCLIYLGDLARYKGMYAEGDSRSRQYASASSYYLQAASLWPASGNPHHQLAIVASYSRDEFVTTYRYFRSLAVEYPFPTARDNLIVAFDKNRQSYEKLFVPSKDSSKRLTGKGRGKGADISLKDATLVAGPEKDKVTIANEMLKAFSIRFVHLNGILFTRTSLETFFDVLASTSSSLREVISLGSAKELTLGIDTSDSALFIVRVVTMLIFSVHNSKKETEGQSYAEIVQRVEPARNSLTASFELLGLVIEKCVQLGDPSSSYFLPGVLVFVEWLACCPDIALGSDPDDRQTAVRNSFWNQFVVFFNQVLSLGPTFIDDVEDETCFSNMSLYDERETENRLALWEDYELRGFLPLLPAQTILNFSRKHSFGTEGPKEKKARIKRIFAAGKALTSVIKVDQNHVYFDSKKKKFLVGVKPADDFLDSHSSPPKACNALQDNQVMIDHNSPIMQLDQQIYMGEEDDDDEVIVFKPLVTEKRKEASDQIYVPSGGFRKSDQVTTMGDFKALSGSDVAFHENQILQARGNASIQVPASVGANLLGPLQPSTQSQAMHMQQVQTQVQVPASVGANLLGLLLTSTQSQAMHMQQVQTQAVNPQPAQSLAASRLQPIQSQVAQPLPSRVVHFQQTQAQVSHVSPAHSQSTSFGGGSKWSPEEAASLASSLSGFAQLGNGHVMRNEMQGNHGVSYYPAHSLPVHQSYNGNGMGGMPYSQSRTPEAVFPPKIDPVLSSGVVADGLGVQSSLAKKNPISRAFRHLGPPPGFNSVPAKLQKEPAPGSELSGNNHLPVDDYSWLDGYQAQSSRGVGLNSSLNYATSGKPEHLGSTGNGLNGPANFPFPGKQVPTSQVQADFPYFQNPQKDNFVDKNHQSTQLPEQYQGQSTWSSRHFV</sequence>
<protein>
    <recommendedName>
        <fullName evidence="1">Nonsense-mediated mRNA decay factor SMG7</fullName>
    </recommendedName>
    <alternativeName>
        <fullName evidence="8">Protein SMG7</fullName>
    </alternativeName>
    <alternativeName>
        <fullName evidence="8">SMG7 homolog</fullName>
    </alternativeName>
</protein>
<proteinExistence type="evidence at protein level"/>
<evidence type="ECO:0000250" key="1">
    <source>
        <dbReference type="UniProtKB" id="Q92540"/>
    </source>
</evidence>
<evidence type="ECO:0000256" key="2">
    <source>
        <dbReference type="SAM" id="MobiDB-lite"/>
    </source>
</evidence>
<evidence type="ECO:0000269" key="3">
    <source>
    </source>
</evidence>
<evidence type="ECO:0000269" key="4">
    <source>
    </source>
</evidence>
<evidence type="ECO:0000269" key="5">
    <source>
    </source>
</evidence>
<evidence type="ECO:0000269" key="6">
    <source>
    </source>
</evidence>
<evidence type="ECO:0000269" key="7">
    <source>
    </source>
</evidence>
<evidence type="ECO:0000303" key="8">
    <source>
    </source>
</evidence>
<evidence type="ECO:0000312" key="9">
    <source>
        <dbReference type="Araport" id="AT5G19400"/>
    </source>
</evidence>
<evidence type="ECO:0000312" key="10">
    <source>
        <dbReference type="EMBL" id="AF296837"/>
    </source>
</evidence>
<reference key="1">
    <citation type="journal article" date="2008" name="J. Cell Sci.">
        <title>Arabidopsis SMG7 protein is required for exit from meiosis.</title>
        <authorList>
            <person name="Riehs N."/>
            <person name="Akimcheva S."/>
            <person name="Puizina J."/>
            <person name="Bulankova P."/>
            <person name="Idol R.A."/>
            <person name="Siroky J."/>
            <person name="Schleiffer A."/>
            <person name="Schweizer D."/>
            <person name="Shippen D.E."/>
            <person name="Riha K."/>
        </authorList>
    </citation>
    <scope>NUCLEOTIDE SEQUENCE [MRNA]</scope>
    <scope>FUNCTION</scope>
    <scope>TISSUE SPECIFICITY</scope>
    <scope>DISRUPTION PHENOTYPE</scope>
    <source>
        <strain>cv. Columbia</strain>
    </source>
</reference>
<reference key="2">
    <citation type="journal article" date="2000" name="Nature">
        <title>Sequence and analysis of chromosome 5 of the plant Arabidopsis thaliana.</title>
        <authorList>
            <person name="Tabata S."/>
            <person name="Kaneko T."/>
            <person name="Nakamura Y."/>
            <person name="Kotani H."/>
            <person name="Kato T."/>
            <person name="Asamizu E."/>
            <person name="Miyajima N."/>
            <person name="Sasamoto S."/>
            <person name="Kimura T."/>
            <person name="Hosouchi T."/>
            <person name="Kawashima K."/>
            <person name="Kohara M."/>
            <person name="Matsumoto M."/>
            <person name="Matsuno A."/>
            <person name="Muraki A."/>
            <person name="Nakayama S."/>
            <person name="Nakazaki N."/>
            <person name="Naruo K."/>
            <person name="Okumura S."/>
            <person name="Shinpo S."/>
            <person name="Takeuchi C."/>
            <person name="Wada T."/>
            <person name="Watanabe A."/>
            <person name="Yamada M."/>
            <person name="Yasuda M."/>
            <person name="Sato S."/>
            <person name="de la Bastide M."/>
            <person name="Huang E."/>
            <person name="Spiegel L."/>
            <person name="Gnoj L."/>
            <person name="O'Shaughnessy A."/>
            <person name="Preston R."/>
            <person name="Habermann K."/>
            <person name="Murray J."/>
            <person name="Johnson D."/>
            <person name="Rohlfing T."/>
            <person name="Nelson J."/>
            <person name="Stoneking T."/>
            <person name="Pepin K."/>
            <person name="Spieth J."/>
            <person name="Sekhon M."/>
            <person name="Armstrong J."/>
            <person name="Becker M."/>
            <person name="Belter E."/>
            <person name="Cordum H."/>
            <person name="Cordes M."/>
            <person name="Courtney L."/>
            <person name="Courtney W."/>
            <person name="Dante M."/>
            <person name="Du H."/>
            <person name="Edwards J."/>
            <person name="Fryman J."/>
            <person name="Haakensen B."/>
            <person name="Lamar E."/>
            <person name="Latreille P."/>
            <person name="Leonard S."/>
            <person name="Meyer R."/>
            <person name="Mulvaney E."/>
            <person name="Ozersky P."/>
            <person name="Riley A."/>
            <person name="Strowmatt C."/>
            <person name="Wagner-McPherson C."/>
            <person name="Wollam A."/>
            <person name="Yoakum M."/>
            <person name="Bell M."/>
            <person name="Dedhia N."/>
            <person name="Parnell L."/>
            <person name="Shah R."/>
            <person name="Rodriguez M."/>
            <person name="Hoon See L."/>
            <person name="Vil D."/>
            <person name="Baker J."/>
            <person name="Kirchoff K."/>
            <person name="Toth K."/>
            <person name="King L."/>
            <person name="Bahret A."/>
            <person name="Miller B."/>
            <person name="Marra M.A."/>
            <person name="Martienssen R."/>
            <person name="McCombie W.R."/>
            <person name="Wilson R.K."/>
            <person name="Murphy G."/>
            <person name="Bancroft I."/>
            <person name="Volckaert G."/>
            <person name="Wambutt R."/>
            <person name="Duesterhoeft A."/>
            <person name="Stiekema W."/>
            <person name="Pohl T."/>
            <person name="Entian K.-D."/>
            <person name="Terryn N."/>
            <person name="Hartley N."/>
            <person name="Bent E."/>
            <person name="Johnson S."/>
            <person name="Langham S.-A."/>
            <person name="McCullagh B."/>
            <person name="Robben J."/>
            <person name="Grymonprez B."/>
            <person name="Zimmermann W."/>
            <person name="Ramsperger U."/>
            <person name="Wedler H."/>
            <person name="Balke K."/>
            <person name="Wedler E."/>
            <person name="Peters S."/>
            <person name="van Staveren M."/>
            <person name="Dirkse W."/>
            <person name="Mooijman P."/>
            <person name="Klein Lankhorst R."/>
            <person name="Weitzenegger T."/>
            <person name="Bothe G."/>
            <person name="Rose M."/>
            <person name="Hauf J."/>
            <person name="Berneiser S."/>
            <person name="Hempel S."/>
            <person name="Feldpausch M."/>
            <person name="Lamberth S."/>
            <person name="Villarroel R."/>
            <person name="Gielen J."/>
            <person name="Ardiles W."/>
            <person name="Bents O."/>
            <person name="Lemcke K."/>
            <person name="Kolesov G."/>
            <person name="Mayer K.F.X."/>
            <person name="Rudd S."/>
            <person name="Schoof H."/>
            <person name="Schueller C."/>
            <person name="Zaccaria P."/>
            <person name="Mewes H.-W."/>
            <person name="Bevan M."/>
            <person name="Fransz P.F."/>
        </authorList>
    </citation>
    <scope>NUCLEOTIDE SEQUENCE [LARGE SCALE GENOMIC DNA]</scope>
    <source>
        <strain>cv. Columbia</strain>
    </source>
</reference>
<reference key="3">
    <citation type="journal article" date="2017" name="Plant J.">
        <title>Araport11: a complete reannotation of the Arabidopsis thaliana reference genome.</title>
        <authorList>
            <person name="Cheng C.Y."/>
            <person name="Krishnakumar V."/>
            <person name="Chan A.P."/>
            <person name="Thibaud-Nissen F."/>
            <person name="Schobel S."/>
            <person name="Town C.D."/>
        </authorList>
    </citation>
    <scope>GENOME REANNOTATION</scope>
    <source>
        <strain>cv. Columbia</strain>
    </source>
</reference>
<reference key="4">
    <citation type="journal article" date="2010" name="Plant Cell">
        <title>Meiotic progression in Arabidopsis is governed by complex regulatory interactions between SMG7, TDM1, and the meiosis I-specific cyclin TAM.</title>
        <authorList>
            <person name="Bulankova P."/>
            <person name="Riehs-Kearnan N."/>
            <person name="Nowack M.K."/>
            <person name="Schnittger A."/>
            <person name="Riha K."/>
        </authorList>
    </citation>
    <scope>FUNCTION</scope>
</reference>
<reference key="5">
    <citation type="journal article" date="2012" name="Nucleic Acids Res.">
        <title>Aberrant growth and lethality of Arabidopsis deficient in nonsense-mediated RNA decay factors is caused by autoimmune-like response.</title>
        <authorList>
            <person name="Riehs-Kearnan N."/>
            <person name="Gloggnitzer J."/>
            <person name="Dekrout B."/>
            <person name="Jonak C."/>
            <person name="Riha K."/>
        </authorList>
    </citation>
    <scope>FUNCTION</scope>
</reference>
<reference key="6">
    <citation type="journal article" date="2013" name="Plant J.">
        <title>The late steps of plant nonsense-mediated mRNA decay.</title>
        <authorList>
            <person name="Merai Z."/>
            <person name="Benkovics A.H."/>
            <person name="Nyiko T."/>
            <person name="Debreczeny M."/>
            <person name="Hiripi L."/>
            <person name="Kerenyi Z."/>
            <person name="Kondorosi E."/>
            <person name="Silhavy D."/>
        </authorList>
    </citation>
    <scope>FUNCTION</scope>
    <scope>SUBCELLULAR LOCATION</scope>
</reference>
<reference key="7">
    <citation type="journal article" date="2017" name="PLoS Genet.">
        <title>The GYF domain protein PSIG1 dampens the induction of cell death during plant-pathogen interactions.</title>
        <authorList>
            <person name="Matsui H."/>
            <person name="Nomura Y."/>
            <person name="Egusa M."/>
            <person name="Hamada T."/>
            <person name="Hyon G.-S."/>
            <person name="Kaminaka H."/>
            <person name="Watanabe Y."/>
            <person name="Ueda T."/>
            <person name="Trujillo M."/>
            <person name="Shirasu K."/>
            <person name="Nakagami H."/>
        </authorList>
    </citation>
    <scope>FUNCTION</scope>
    <scope>DISRUPTION PHENOTYPE</scope>
    <scope>MUTAGENESIS OF GLY-933</scope>
    <scope>INTERACTION WITH EXA1</scope>
    <scope>SUBCELLULAR LOCATION</scope>
</reference>
<accession>A9QM73</accession>
<keyword id="KW-0963">Cytoplasm</keyword>
<keyword id="KW-0217">Developmental protein</keyword>
<keyword id="KW-0341">Growth regulation</keyword>
<keyword id="KW-1210">Necrosis</keyword>
<keyword id="KW-0866">Nonsense-mediated mRNA decay</keyword>
<keyword id="KW-0611">Plant defense</keyword>
<keyword id="KW-1185">Reference proteome</keyword>
<keyword id="KW-0677">Repeat</keyword>
<keyword id="KW-0802">TPR repeat</keyword>
<organism>
    <name type="scientific">Arabidopsis thaliana</name>
    <name type="common">Mouse-ear cress</name>
    <dbReference type="NCBI Taxonomy" id="3702"/>
    <lineage>
        <taxon>Eukaryota</taxon>
        <taxon>Viridiplantae</taxon>
        <taxon>Streptophyta</taxon>
        <taxon>Embryophyta</taxon>
        <taxon>Tracheophyta</taxon>
        <taxon>Spermatophyta</taxon>
        <taxon>Magnoliopsida</taxon>
        <taxon>eudicotyledons</taxon>
        <taxon>Gunneridae</taxon>
        <taxon>Pentapetalae</taxon>
        <taxon>rosids</taxon>
        <taxon>malvids</taxon>
        <taxon>Brassicales</taxon>
        <taxon>Brassicaceae</taxon>
        <taxon>Camelineae</taxon>
        <taxon>Arabidopsis</taxon>
    </lineage>
</organism>
<feature type="chain" id="PRO_0000422380" description="Nonsense-mediated mRNA decay factor SMG7">
    <location>
        <begin position="1"/>
        <end position="1059"/>
    </location>
</feature>
<feature type="repeat" description="TPR 1">
    <location>
        <begin position="149"/>
        <end position="183"/>
    </location>
</feature>
<feature type="repeat" description="TPR 2">
    <location>
        <begin position="184"/>
        <end position="217"/>
    </location>
</feature>
<feature type="region of interest" description="Disordered" evidence="2">
    <location>
        <begin position="806"/>
        <end position="826"/>
    </location>
</feature>
<feature type="region of interest" description="Disordered" evidence="2">
    <location>
        <begin position="927"/>
        <end position="955"/>
    </location>
</feature>
<feature type="region of interest" description="Disordered" evidence="2">
    <location>
        <begin position="987"/>
        <end position="1015"/>
    </location>
</feature>
<feature type="region of interest" description="Disordered" evidence="2">
    <location>
        <begin position="1040"/>
        <end position="1059"/>
    </location>
</feature>
<feature type="compositionally biased region" description="Polar residues" evidence="2">
    <location>
        <begin position="806"/>
        <end position="817"/>
    </location>
</feature>
<feature type="mutagenesis site" description="Abolished interaction with EXA1." evidence="7">
    <original>G</original>
    <variation>A</variation>
    <location>
        <position position="933"/>
    </location>
</feature>
<dbReference type="EMBL" id="EU126544">
    <property type="protein sequence ID" value="ABW96769.1"/>
    <property type="molecule type" value="mRNA"/>
</dbReference>
<dbReference type="EMBL" id="AF296837">
    <property type="status" value="NOT_ANNOTATED_CDS"/>
    <property type="molecule type" value="Genomic_DNA"/>
</dbReference>
<dbReference type="EMBL" id="CP002688">
    <property type="protein sequence ID" value="AED92699.1"/>
    <property type="molecule type" value="Genomic_DNA"/>
</dbReference>
<dbReference type="EMBL" id="CP002688">
    <property type="protein sequence ID" value="AED92700.1"/>
    <property type="molecule type" value="Genomic_DNA"/>
</dbReference>
<dbReference type="EMBL" id="CP002688">
    <property type="protein sequence ID" value="AED92701.1"/>
    <property type="molecule type" value="Genomic_DNA"/>
</dbReference>
<dbReference type="RefSeq" id="NP_001190336.1">
    <property type="nucleotide sequence ID" value="NM_001203407.2"/>
</dbReference>
<dbReference type="RefSeq" id="NP_001190337.1">
    <property type="nucleotide sequence ID" value="NM_001203408.1"/>
</dbReference>
<dbReference type="RefSeq" id="NP_197441.3">
    <property type="nucleotide sequence ID" value="NM_121945.3"/>
</dbReference>
<dbReference type="SMR" id="A9QM73"/>
<dbReference type="BioGRID" id="17336">
    <property type="interactions" value="2"/>
</dbReference>
<dbReference type="FunCoup" id="A9QM73">
    <property type="interactions" value="2172"/>
</dbReference>
<dbReference type="IntAct" id="A9QM73">
    <property type="interactions" value="1"/>
</dbReference>
<dbReference type="STRING" id="3702.A9QM73"/>
<dbReference type="GlyGen" id="A9QM73">
    <property type="glycosylation" value="5 sites, 1 O-linked glycan (5 sites)"/>
</dbReference>
<dbReference type="iPTMnet" id="A9QM73"/>
<dbReference type="PaxDb" id="3702-AT5G19400.1"/>
<dbReference type="ProteomicsDB" id="232598"/>
<dbReference type="EnsemblPlants" id="AT5G19400.1">
    <property type="protein sequence ID" value="AT5G19400.1"/>
    <property type="gene ID" value="AT5G19400"/>
</dbReference>
<dbReference type="EnsemblPlants" id="AT5G19400.2">
    <property type="protein sequence ID" value="AT5G19400.2"/>
    <property type="gene ID" value="AT5G19400"/>
</dbReference>
<dbReference type="EnsemblPlants" id="AT5G19400.3">
    <property type="protein sequence ID" value="AT5G19400.3"/>
    <property type="gene ID" value="AT5G19400"/>
</dbReference>
<dbReference type="GeneID" id="832060"/>
<dbReference type="Gramene" id="AT5G19400.1">
    <property type="protein sequence ID" value="AT5G19400.1"/>
    <property type="gene ID" value="AT5G19400"/>
</dbReference>
<dbReference type="Gramene" id="AT5G19400.2">
    <property type="protein sequence ID" value="AT5G19400.2"/>
    <property type="gene ID" value="AT5G19400"/>
</dbReference>
<dbReference type="Gramene" id="AT5G19400.3">
    <property type="protein sequence ID" value="AT5G19400.3"/>
    <property type="gene ID" value="AT5G19400"/>
</dbReference>
<dbReference type="KEGG" id="ath:AT5G19400"/>
<dbReference type="Araport" id="AT5G19400"/>
<dbReference type="TAIR" id="AT5G19400">
    <property type="gene designation" value="SMG7"/>
</dbReference>
<dbReference type="eggNOG" id="KOG2162">
    <property type="taxonomic scope" value="Eukaryota"/>
</dbReference>
<dbReference type="HOGENOM" id="CLU_010769_0_0_1"/>
<dbReference type="InParanoid" id="A9QM73"/>
<dbReference type="PhylomeDB" id="A9QM73"/>
<dbReference type="CD-CODE" id="60F64496">
    <property type="entry name" value="P-body"/>
</dbReference>
<dbReference type="PRO" id="PR:A9QM73"/>
<dbReference type="Proteomes" id="UP000006548">
    <property type="component" value="Chromosome 5"/>
</dbReference>
<dbReference type="ExpressionAtlas" id="A9QM73">
    <property type="expression patterns" value="baseline and differential"/>
</dbReference>
<dbReference type="GO" id="GO:0005634">
    <property type="term" value="C:nucleus"/>
    <property type="evidence" value="ECO:0000314"/>
    <property type="project" value="TAIR"/>
</dbReference>
<dbReference type="GO" id="GO:0000932">
    <property type="term" value="C:P-body"/>
    <property type="evidence" value="ECO:0000314"/>
    <property type="project" value="UniProtKB"/>
</dbReference>
<dbReference type="GO" id="GO:0006952">
    <property type="term" value="P:defense response"/>
    <property type="evidence" value="ECO:0007669"/>
    <property type="project" value="UniProtKB-KW"/>
</dbReference>
<dbReference type="GO" id="GO:0051321">
    <property type="term" value="P:meiotic cell cycle"/>
    <property type="evidence" value="ECO:0000315"/>
    <property type="project" value="TAIR"/>
</dbReference>
<dbReference type="GO" id="GO:0090306">
    <property type="term" value="P:meiotic spindle assembly"/>
    <property type="evidence" value="ECO:0000315"/>
    <property type="project" value="TAIR"/>
</dbReference>
<dbReference type="GO" id="GO:0000184">
    <property type="term" value="P:nuclear-transcribed mRNA catabolic process, nonsense-mediated decay"/>
    <property type="evidence" value="ECO:0000315"/>
    <property type="project" value="TAIR"/>
</dbReference>
<dbReference type="GO" id="GO:0012501">
    <property type="term" value="P:programmed cell death"/>
    <property type="evidence" value="ECO:0007669"/>
    <property type="project" value="UniProtKB-KW"/>
</dbReference>
<dbReference type="GO" id="GO:0031347">
    <property type="term" value="P:regulation of defense response"/>
    <property type="evidence" value="ECO:0000315"/>
    <property type="project" value="UniProtKB"/>
</dbReference>
<dbReference type="FunFam" id="1.25.40.10:FF:000225">
    <property type="entry name" value="Protein SMG7"/>
    <property type="match status" value="1"/>
</dbReference>
<dbReference type="Gene3D" id="1.25.40.10">
    <property type="entry name" value="Tetratricopeptide repeat domain"/>
    <property type="match status" value="1"/>
</dbReference>
<dbReference type="InterPro" id="IPR018834">
    <property type="entry name" value="DNA/RNA-bd_Est1-type"/>
</dbReference>
<dbReference type="InterPro" id="IPR019458">
    <property type="entry name" value="Est1-like_N"/>
</dbReference>
<dbReference type="InterPro" id="IPR045153">
    <property type="entry name" value="Est1/Ebs1-like"/>
</dbReference>
<dbReference type="InterPro" id="IPR011990">
    <property type="entry name" value="TPR-like_helical_dom_sf"/>
</dbReference>
<dbReference type="PANTHER" id="PTHR15696:SF35">
    <property type="entry name" value="NONSENSE-MEDIATED MRNA DECAY FACTOR SMG7"/>
    <property type="match status" value="1"/>
</dbReference>
<dbReference type="PANTHER" id="PTHR15696">
    <property type="entry name" value="SMG-7 SUPPRESSOR WITH MORPHOLOGICAL EFFECT ON GENITALIA PROTEIN 7"/>
    <property type="match status" value="1"/>
</dbReference>
<dbReference type="Pfam" id="PF10374">
    <property type="entry name" value="EST1"/>
    <property type="match status" value="1"/>
</dbReference>
<dbReference type="Pfam" id="PF10373">
    <property type="entry name" value="EST1_DNA_bind"/>
    <property type="match status" value="1"/>
</dbReference>
<dbReference type="SUPFAM" id="SSF48452">
    <property type="entry name" value="TPR-like"/>
    <property type="match status" value="1"/>
</dbReference>
<comment type="function">
    <text evidence="3 4 5 6 7">Plays multiple roles in growth and development. Involved in nonsense-mediated mRNA decay (NMD). May provide a link to the mRNA degradation machinery to initiate NMD and serve as an adapter for UPF proteins function. Required for meiotic progression through anaphase II of pollen mother cells. May counteract cyclin-dependent kinase (CDK) activity at the end of meiosis. May play a role in plant defense through its involvement in NMD. Together with EXA1, helps to restrict cell death induction during pathogen infection in a salicylic acid- (SA) and reactive oxygen species- (ROS) independent manner (PubMed:29073135).</text>
</comment>
<comment type="subunit">
    <text evidence="7">Interacts with EXA1.</text>
</comment>
<comment type="subcellular location">
    <subcellularLocation>
        <location evidence="6 7">Cytoplasm</location>
        <location evidence="6 7">P-body</location>
    </subcellularLocation>
</comment>
<comment type="tissue specificity">
    <text evidence="3">Expressed in flowers and at lower levels in stems and leaves.</text>
</comment>
<comment type="disruption phenotype">
    <text evidence="3 7">Embryonic lethality when homozygous (PubMed:18544632). No spontaneous lesions, but enhanced cell death independent of salicylic acid (SA) biosynthesis or reactive oxygen species (ROS) production during pathogen infection (PubMed:29073135).</text>
</comment>
<gene>
    <name evidence="8" type="primary">SMG7</name>
    <name evidence="9" type="ordered locus">At5g19400</name>
    <name evidence="10" type="ORF">F7K24</name>
</gene>
<name>SMG7_ARATH</name>